<gene>
    <name type="primary">COR1</name>
    <name type="synonym">QCR1</name>
    <name type="ordered locus">YBL045C</name>
    <name type="ORF">YBL0403</name>
</gene>
<sequence>MLRTVTSKTVSNQFKRSLATAVATPKAEVTQLSNGIVVATEHNPSAHTASVGVVFGSGAANENPYNNGVSNLWKNIFLSKENSAVAAKEGLALSSNISRDFQSYIVSSLPGSTDKSLDFLNQSFIQQKANLLSSSNFEATKKSVLKQVQDFEENDHPNRVLEHLHSTAFQNTPLSLPTRGTLESLENLVVADLESFANNHFLNSNAVVVGTGNIKHEDLVNSIESKNLSLQTGTKPVLKKKAAFLGSEVRLRDDTLPKAWISLAVEGEPVNSPNYFVAKLAAQIFGSYNAFEPASRLQGIKLLDNIQEYQLCDNFNHFSLSYKDSGLWGFSTATRNVTMIDDLIHFTLKQWNRLTISVTDTEVERAKSLLKLQLGQLYESGNPVNDANLLGAEVLIKGSKLSLGEAFKKIDAITVKDVKAWAGKRLWDQDIAIAGTGQIEGLLDYMRIRSDMSMMRW</sequence>
<organism>
    <name type="scientific">Saccharomyces cerevisiae (strain ATCC 204508 / S288c)</name>
    <name type="common">Baker's yeast</name>
    <dbReference type="NCBI Taxonomy" id="559292"/>
    <lineage>
        <taxon>Eukaryota</taxon>
        <taxon>Fungi</taxon>
        <taxon>Dikarya</taxon>
        <taxon>Ascomycota</taxon>
        <taxon>Saccharomycotina</taxon>
        <taxon>Saccharomycetes</taxon>
        <taxon>Saccharomycetales</taxon>
        <taxon>Saccharomycetaceae</taxon>
        <taxon>Saccharomyces</taxon>
    </lineage>
</organism>
<comment type="function">
    <text evidence="12">Component of the ubiquinol-cytochrome c oxidoreductase, a multisubunit transmembrane complex that is part of the mitochondrial electron transport chain which drives oxidative phosphorylation. The respiratory chain contains 3 multisubunit complexes succinate dehydrogenase (complex II, CII), ubiquinol-cytochrome c oxidoreductase (cytochrome b-c1 complex, complex III, CIII) and cytochrome c oxidase (complex IV, CIV), that cooperate to transfer electrons derived from NADH and succinate to molecular oxygen, creating an electrochemical gradient over the inner membrane that drives transmembrane transport and the ATP synthase. The cytochrome b-c1 complex catalyzes electron transfer from ubiquinol to cytochrome c, linking this redox reaction to translocation of protons across the mitochondrial inner membrane, with protons being carried across the membrane as hydrogens on the quinol. In the process called Q cycle, 2 protons are consumed from the matrix, 4 protons are released into the intermembrane space and 2 electrons are passed to cytochrome c.</text>
</comment>
<comment type="subunit">
    <text evidence="2 3 4 6 8 9 10">Component of the ubiquinol-cytochrome c oxidoreductase (cytochrome b-c1 complex, complex III, CIII), a multisubunit enzyme composed of 10 subunits. The complex is composed of 3 respiratory subunits cytochrome b (COB), cytochrome c1 (CYT1) and Rieske protein (RIP1), 2 core protein subunits COR1 and QCR2, and 5 low-molecular weight protein subunits QCR6, QCR7, QCR8, QCR9 and QCR10 (PubMed:10873857, PubMed:11880631, PubMed:18390544, PubMed:30598554). The complex exists as an obligatory dimer and forms supercomplexes (SCs) in the inner mitochondrial membrane with a monomer or a dimer of cytochrome c oxidase (complex IV, CIV), resulting in 2 different assemblies (supercomplexes III(2)IV and III(2)IV(2)) (PubMed:10764779, PubMed:10775262, PubMed:30598554, PubMed:30598556). COR1 interacts with COX5A at the CIII-CIV interface (PubMed:30598554, PubMed:30598556).</text>
</comment>
<comment type="interaction">
    <interactant intactId="EBI-19922">
        <id>P07256</id>
    </interactant>
    <interactant intactId="EBI-2435921">
        <id>P00401</id>
        <label>COX1</label>
    </interactant>
    <organismsDiffer>false</organismsDiffer>
    <experiments>2</experiments>
</comment>
<comment type="interaction">
    <interactant intactId="EBI-19922">
        <id>P07256</id>
    </interactant>
    <interactant intactId="EBI-19929">
        <id>P07257</id>
        <label>QCR2</label>
    </interactant>
    <organismsDiffer>false</organismsDiffer>
    <experiments>4</experiments>
</comment>
<comment type="subcellular location">
    <subcellularLocation>
        <location evidence="5 8 9">Mitochondrion inner membrane</location>
        <topology evidence="8 9">Peripheral membrane protein</topology>
        <orientation evidence="8 9">Matrix side</orientation>
    </subcellularLocation>
</comment>
<comment type="miscellaneous">
    <text evidence="7">Present with 19300 molecules/cell in log phase SD medium.</text>
</comment>
<comment type="similarity">
    <text evidence="11">Belongs to the peptidase M16 family. UQCRC1/QCR1 subfamily.</text>
</comment>
<comment type="caution">
    <text evidence="11">Does not seem to have protease activity as it lacks the zinc-binding site.</text>
</comment>
<protein>
    <recommendedName>
        <fullName>Cytochrome b-c1 complex subunit 1, mitochondrial</fullName>
    </recommendedName>
    <alternativeName>
        <fullName>Complex III subunit 1</fullName>
    </alternativeName>
    <alternativeName>
        <fullName>Core protein I</fullName>
    </alternativeName>
    <alternativeName>
        <fullName>Ubiquinol-cytochrome c oxidoreductase core protein 1</fullName>
    </alternativeName>
    <alternativeName>
        <fullName>Ubiquinol-cytochrome c reductase 44 kDa protein</fullName>
    </alternativeName>
</protein>
<keyword id="KW-0002">3D-structure</keyword>
<keyword id="KW-0249">Electron transport</keyword>
<keyword id="KW-0472">Membrane</keyword>
<keyword id="KW-0496">Mitochondrion</keyword>
<keyword id="KW-0999">Mitochondrion inner membrane</keyword>
<keyword id="KW-1185">Reference proteome</keyword>
<keyword id="KW-0679">Respiratory chain</keyword>
<keyword id="KW-0809">Transit peptide</keyword>
<keyword id="KW-0813">Transport</keyword>
<feature type="transit peptide" description="Mitochondrion" evidence="1 13">
    <location>
        <begin position="1"/>
        <end position="26"/>
    </location>
</feature>
<feature type="chain" id="PRO_0000026788" description="Cytochrome b-c1 complex subunit 1, mitochondrial">
    <location>
        <begin position="27"/>
        <end position="457"/>
    </location>
</feature>
<feature type="strand" evidence="15">
    <location>
        <begin position="30"/>
        <end position="42"/>
    </location>
</feature>
<feature type="strand" evidence="15">
    <location>
        <begin position="47"/>
        <end position="56"/>
    </location>
</feature>
<feature type="helix" evidence="15">
    <location>
        <begin position="59"/>
        <end position="61"/>
    </location>
</feature>
<feature type="turn" evidence="15">
    <location>
        <begin position="64"/>
        <end position="68"/>
    </location>
</feature>
<feature type="helix" evidence="15">
    <location>
        <begin position="69"/>
        <end position="77"/>
    </location>
</feature>
<feature type="helix" evidence="15">
    <location>
        <begin position="80"/>
        <end position="88"/>
    </location>
</feature>
<feature type="strand" evidence="15">
    <location>
        <begin position="92"/>
        <end position="97"/>
    </location>
</feature>
<feature type="strand" evidence="17">
    <location>
        <begin position="98"/>
        <end position="100"/>
    </location>
</feature>
<feature type="strand" evidence="15">
    <location>
        <begin position="102"/>
        <end position="108"/>
    </location>
</feature>
<feature type="helix" evidence="14">
    <location>
        <begin position="110"/>
        <end position="112"/>
    </location>
</feature>
<feature type="helix" evidence="15">
    <location>
        <begin position="113"/>
        <end position="124"/>
    </location>
</feature>
<feature type="turn" evidence="15">
    <location>
        <begin position="129"/>
        <end position="132"/>
    </location>
</feature>
<feature type="helix" evidence="15">
    <location>
        <begin position="134"/>
        <end position="154"/>
    </location>
</feature>
<feature type="helix" evidence="15">
    <location>
        <begin position="156"/>
        <end position="168"/>
    </location>
</feature>
<feature type="turn" evidence="15">
    <location>
        <begin position="169"/>
        <end position="171"/>
    </location>
</feature>
<feature type="helix" evidence="15">
    <location>
        <begin position="173"/>
        <end position="175"/>
    </location>
</feature>
<feature type="helix" evidence="15">
    <location>
        <begin position="182"/>
        <end position="186"/>
    </location>
</feature>
<feature type="helix" evidence="15">
    <location>
        <begin position="190"/>
        <end position="200"/>
    </location>
</feature>
<feature type="helix" evidence="15">
    <location>
        <begin position="203"/>
        <end position="205"/>
    </location>
</feature>
<feature type="strand" evidence="15">
    <location>
        <begin position="206"/>
        <end position="213"/>
    </location>
</feature>
<feature type="helix" evidence="15">
    <location>
        <begin position="216"/>
        <end position="223"/>
    </location>
</feature>
<feature type="strand" evidence="15">
    <location>
        <begin position="247"/>
        <end position="252"/>
    </location>
</feature>
<feature type="strand" evidence="15">
    <location>
        <begin position="256"/>
        <end position="266"/>
    </location>
</feature>
<feature type="strand" evidence="17">
    <location>
        <begin position="270"/>
        <end position="272"/>
    </location>
</feature>
<feature type="helix" evidence="15">
    <location>
        <begin position="275"/>
        <end position="285"/>
    </location>
</feature>
<feature type="strand" evidence="15">
    <location>
        <begin position="287"/>
        <end position="289"/>
    </location>
</feature>
<feature type="helix" evidence="15">
    <location>
        <begin position="295"/>
        <end position="297"/>
    </location>
</feature>
<feature type="helix" evidence="15">
    <location>
        <begin position="302"/>
        <end position="307"/>
    </location>
</feature>
<feature type="turn" evidence="15">
    <location>
        <begin position="308"/>
        <end position="310"/>
    </location>
</feature>
<feature type="strand" evidence="15">
    <location>
        <begin position="313"/>
        <end position="321"/>
    </location>
</feature>
<feature type="strand" evidence="15">
    <location>
        <begin position="326"/>
        <end position="335"/>
    </location>
</feature>
<feature type="helix" evidence="19">
    <location>
        <begin position="337"/>
        <end position="339"/>
    </location>
</feature>
<feature type="helix" evidence="15">
    <location>
        <begin position="340"/>
        <end position="356"/>
    </location>
</feature>
<feature type="helix" evidence="15">
    <location>
        <begin position="360"/>
        <end position="378"/>
    </location>
</feature>
<feature type="helix" evidence="15">
    <location>
        <begin position="383"/>
        <end position="397"/>
    </location>
</feature>
<feature type="helix" evidence="15">
    <location>
        <begin position="403"/>
        <end position="412"/>
    </location>
</feature>
<feature type="helix" evidence="15">
    <location>
        <begin position="415"/>
        <end position="425"/>
    </location>
</feature>
<feature type="turn" evidence="15">
    <location>
        <begin position="426"/>
        <end position="428"/>
    </location>
</feature>
<feature type="strand" evidence="15">
    <location>
        <begin position="432"/>
        <end position="438"/>
    </location>
</feature>
<feature type="strand" evidence="16">
    <location>
        <begin position="440"/>
        <end position="442"/>
    </location>
</feature>
<feature type="helix" evidence="15">
    <location>
        <begin position="445"/>
        <end position="450"/>
    </location>
</feature>
<feature type="turn" evidence="18">
    <location>
        <begin position="451"/>
        <end position="453"/>
    </location>
</feature>
<name>QCR1_YEAST</name>
<reference key="1">
    <citation type="journal article" date="1986" name="J. Biol. Chem.">
        <title>Assembly of the mitochondrial membrane system. Characterization of COR1, the structural gene for the 44-kilodalton core protein of yeast coenzyme QH2-cytochrome c reductase.</title>
        <authorList>
            <person name="Tzagoloff A."/>
            <person name="Wu M."/>
            <person name="Crivellone M."/>
        </authorList>
    </citation>
    <scope>NUCLEOTIDE SEQUENCE [GENOMIC DNA]</scope>
</reference>
<reference key="2">
    <citation type="journal article" date="1994" name="Yeast">
        <title>The sequence of a 22.4 kb DNA fragment from the left arm of yeast chromosome II reveals homologues to bacterial proline synthetase and murine alpha-adaptin, as well as a new permease and a DNA-binding protein.</title>
        <authorList>
            <person name="de Wergifosse P."/>
            <person name="Jacques B."/>
            <person name="Jonniaux J.-L."/>
            <person name="Purnelle B."/>
            <person name="Skala J."/>
            <person name="Goffeau A."/>
        </authorList>
    </citation>
    <scope>NUCLEOTIDE SEQUENCE [GENOMIC DNA]</scope>
    <source>
        <strain>ATCC 204508 / S288c</strain>
    </source>
</reference>
<reference key="3">
    <citation type="journal article" date="1994" name="EMBO J.">
        <title>Complete DNA sequence of yeast chromosome II.</title>
        <authorList>
            <person name="Feldmann H."/>
            <person name="Aigle M."/>
            <person name="Aljinovic G."/>
            <person name="Andre B."/>
            <person name="Baclet M.C."/>
            <person name="Barthe C."/>
            <person name="Baur A."/>
            <person name="Becam A.-M."/>
            <person name="Biteau N."/>
            <person name="Boles E."/>
            <person name="Brandt T."/>
            <person name="Brendel M."/>
            <person name="Brueckner M."/>
            <person name="Bussereau F."/>
            <person name="Christiansen C."/>
            <person name="Contreras R."/>
            <person name="Crouzet M."/>
            <person name="Cziepluch C."/>
            <person name="Demolis N."/>
            <person name="Delaveau T."/>
            <person name="Doignon F."/>
            <person name="Domdey H."/>
            <person name="Duesterhus S."/>
            <person name="Dubois E."/>
            <person name="Dujon B."/>
            <person name="El Bakkoury M."/>
            <person name="Entian K.-D."/>
            <person name="Feuermann M."/>
            <person name="Fiers W."/>
            <person name="Fobo G.M."/>
            <person name="Fritz C."/>
            <person name="Gassenhuber J."/>
            <person name="Glansdorff N."/>
            <person name="Goffeau A."/>
            <person name="Grivell L.A."/>
            <person name="de Haan M."/>
            <person name="Hein C."/>
            <person name="Herbert C.J."/>
            <person name="Hollenberg C.P."/>
            <person name="Holmstroem K."/>
            <person name="Jacq C."/>
            <person name="Jacquet M."/>
            <person name="Jauniaux J.-C."/>
            <person name="Jonniaux J.-L."/>
            <person name="Kallesoee T."/>
            <person name="Kiesau P."/>
            <person name="Kirchrath L."/>
            <person name="Koetter P."/>
            <person name="Korol S."/>
            <person name="Liebl S."/>
            <person name="Logghe M."/>
            <person name="Lohan A.J.E."/>
            <person name="Louis E.J."/>
            <person name="Li Z.Y."/>
            <person name="Maat M.J."/>
            <person name="Mallet L."/>
            <person name="Mannhaupt G."/>
            <person name="Messenguy F."/>
            <person name="Miosga T."/>
            <person name="Molemans F."/>
            <person name="Mueller S."/>
            <person name="Nasr F."/>
            <person name="Obermaier B."/>
            <person name="Perea J."/>
            <person name="Pierard A."/>
            <person name="Piravandi E."/>
            <person name="Pohl F.M."/>
            <person name="Pohl T.M."/>
            <person name="Potier S."/>
            <person name="Proft M."/>
            <person name="Purnelle B."/>
            <person name="Ramezani Rad M."/>
            <person name="Rieger M."/>
            <person name="Rose M."/>
            <person name="Schaaff-Gerstenschlaeger I."/>
            <person name="Scherens B."/>
            <person name="Schwarzlose C."/>
            <person name="Skala J."/>
            <person name="Slonimski P.P."/>
            <person name="Smits P.H.M."/>
            <person name="Souciet J.-L."/>
            <person name="Steensma H.Y."/>
            <person name="Stucka R."/>
            <person name="Urrestarazu L.A."/>
            <person name="van der Aart Q.J.M."/>
            <person name="Van Dyck L."/>
            <person name="Vassarotti A."/>
            <person name="Vetter I."/>
            <person name="Vierendeels F."/>
            <person name="Vissers S."/>
            <person name="Wagner G."/>
            <person name="de Wergifosse P."/>
            <person name="Wolfe K.H."/>
            <person name="Zagulski M."/>
            <person name="Zimmermann F.K."/>
            <person name="Mewes H.-W."/>
            <person name="Kleine K."/>
        </authorList>
    </citation>
    <scope>NUCLEOTIDE SEQUENCE [LARGE SCALE GENOMIC DNA]</scope>
    <source>
        <strain>ATCC 204508 / S288c</strain>
    </source>
</reference>
<reference key="4">
    <citation type="journal article" date="2014" name="G3 (Bethesda)">
        <title>The reference genome sequence of Saccharomyces cerevisiae: Then and now.</title>
        <authorList>
            <person name="Engel S.R."/>
            <person name="Dietrich F.S."/>
            <person name="Fisk D.G."/>
            <person name="Binkley G."/>
            <person name="Balakrishnan R."/>
            <person name="Costanzo M.C."/>
            <person name="Dwight S.S."/>
            <person name="Hitz B.C."/>
            <person name="Karra K."/>
            <person name="Nash R.S."/>
            <person name="Weng S."/>
            <person name="Wong E.D."/>
            <person name="Lloyd P."/>
            <person name="Skrzypek M.S."/>
            <person name="Miyasato S.R."/>
            <person name="Simison M."/>
            <person name="Cherry J.M."/>
        </authorList>
    </citation>
    <scope>GENOME REANNOTATION</scope>
    <source>
        <strain>ATCC 204508 / S288c</strain>
    </source>
</reference>
<reference key="5">
    <citation type="journal article" date="2007" name="Genome Res.">
        <title>Approaching a complete repository of sequence-verified protein-encoding clones for Saccharomyces cerevisiae.</title>
        <authorList>
            <person name="Hu Y."/>
            <person name="Rolfs A."/>
            <person name="Bhullar B."/>
            <person name="Murthy T.V.S."/>
            <person name="Zhu C."/>
            <person name="Berger M.F."/>
            <person name="Camargo A.A."/>
            <person name="Kelley F."/>
            <person name="McCarron S."/>
            <person name="Jepson D."/>
            <person name="Richardson A."/>
            <person name="Raphael J."/>
            <person name="Moreira D."/>
            <person name="Taycher E."/>
            <person name="Zuo D."/>
            <person name="Mohr S."/>
            <person name="Kane M.F."/>
            <person name="Williamson J."/>
            <person name="Simpson A.J.G."/>
            <person name="Bulyk M.L."/>
            <person name="Harlow E."/>
            <person name="Marsischky G."/>
            <person name="Kolodner R.D."/>
            <person name="LaBaer J."/>
        </authorList>
    </citation>
    <scope>NUCLEOTIDE SEQUENCE [GENOMIC DNA]</scope>
    <source>
        <strain>ATCC 204508 / S288c</strain>
    </source>
</reference>
<reference key="6">
    <citation type="journal article" date="2000" name="EMBO J.">
        <title>Supercomplexes in the respiratory chains of yeast and mammalian mitochondria.</title>
        <authorList>
            <person name="Schaegger H."/>
            <person name="Pfeiffer K."/>
        </authorList>
    </citation>
    <scope>FORMATION OF CYTOCHROME BC1-CYTOCHROME C OXIDASE SUPERCOMPLEX</scope>
</reference>
<reference key="7">
    <citation type="journal article" date="2000" name="J. Biol. Chem.">
        <title>The cytochrome bc1 and cytochrome c oxidase complexes associate to form a single supracomplex in yeast mitochondria.</title>
        <authorList>
            <person name="Cruciat C.M."/>
            <person name="Brunner S."/>
            <person name="Baumann F."/>
            <person name="Neupert W."/>
            <person name="Stuart R.A."/>
        </authorList>
    </citation>
    <scope>FORMATION OF CYTOCHROME BC1-CYTOCHROME C OXIDASE SUPERCOMPLEX</scope>
</reference>
<reference key="8">
    <citation type="journal article" date="2001" name="Biochemistry">
        <title>Yeast mitochondrial dehydrogenases are associated in a supramolecular complex.</title>
        <authorList>
            <person name="Grandier-Vazeille X."/>
            <person name="Bathany K."/>
            <person name="Chaignepain S."/>
            <person name="Camougrand N."/>
            <person name="Manon S."/>
            <person name="Schmitter J.-M."/>
        </authorList>
    </citation>
    <scope>SUBCELLULAR LOCATION</scope>
</reference>
<reference key="9">
    <citation type="journal article" date="2003" name="Mol. Cell">
        <title>Assigning function to yeast proteins by integration of technologies.</title>
        <authorList>
            <person name="Hazbun T.R."/>
            <person name="Malmstroem L."/>
            <person name="Anderson S."/>
            <person name="Graczyk B.J."/>
            <person name="Fox B."/>
            <person name="Riffle M."/>
            <person name="Sundin B.A."/>
            <person name="Aranda J.D."/>
            <person name="McDonald W.H."/>
            <person name="Chiu C.-H."/>
            <person name="Snydsman B.E."/>
            <person name="Bradley P."/>
            <person name="Muller E.G.D."/>
            <person name="Fields S."/>
            <person name="Baker D."/>
            <person name="Yates J.R. III"/>
            <person name="Davis T.N."/>
        </authorList>
    </citation>
    <scope>IDENTIFICATION BY MASS SPECTROMETRY</scope>
</reference>
<reference key="10">
    <citation type="journal article" date="2003" name="Nature">
        <title>Global analysis of protein expression in yeast.</title>
        <authorList>
            <person name="Ghaemmaghami S."/>
            <person name="Huh W.-K."/>
            <person name="Bower K."/>
            <person name="Howson R.W."/>
            <person name="Belle A."/>
            <person name="Dephoure N."/>
            <person name="O'Shea E.K."/>
            <person name="Weissman J.S."/>
        </authorList>
    </citation>
    <scope>LEVEL OF PROTEIN EXPRESSION [LARGE SCALE ANALYSIS]</scope>
</reference>
<reference key="11">
    <citation type="journal article" date="2000" name="Structure">
        <title>Structure at 2.3 A resolution of the cytochrome bc1 complex from the yeast Saccharomyces cerevisiae co-crystallized with an antibody Fv fragment.</title>
        <authorList>
            <person name="Hunte C."/>
            <person name="Koepke J."/>
            <person name="Lange C."/>
            <person name="Rossmanith T."/>
            <person name="Michel H."/>
        </authorList>
    </citation>
    <scope>X-RAY CRYSTALLOGRAPHY (2.3 ANGSTROMS)</scope>
</reference>
<reference key="12">
    <citation type="journal article" date="2002" name="Proc. Natl. Acad. Sci. U.S.A.">
        <title>Crystal structure of the yeast cytochrome bc1 complex with its bound substrate cytochrome c.</title>
        <authorList>
            <person name="Lange C."/>
            <person name="Hunte C."/>
        </authorList>
    </citation>
    <scope>X-RAY CRYSTALLOGRAPHY (2.97 ANGSTROMS)</scope>
</reference>
<reference key="13">
    <citation type="journal article" date="2008" name="J. Biol. Chem.">
        <title>Structure of complex III with bound cytochrome c in reduced state and definition of a minimal core interface for electron transfer.</title>
        <authorList>
            <person name="Solmaz S.R."/>
            <person name="Hunte C."/>
        </authorList>
    </citation>
    <scope>X-RAY CRYSTALLOGRAPHY (1.90 ANGSTROMS)</scope>
</reference>
<reference key="14">
    <citation type="journal article" date="2019" name="Nat. Struct. Mol. Biol.">
        <title>Cryo-EM structure of the yeast respiratory supercomplex.</title>
        <authorList>
            <person name="Rathore S."/>
            <person name="Berndtsson J."/>
            <person name="Marin-Buera L."/>
            <person name="Conrad J."/>
            <person name="Carroni M."/>
            <person name="Brzezinski P."/>
            <person name="Ott M."/>
        </authorList>
    </citation>
    <scope>STRUCTURE BY ELECTRON MICROSCOPY (3.23 ANGSTROMS)</scope>
</reference>
<reference key="15">
    <citation type="journal article" date="2019" name="Nat. Struct. Mol. Biol.">
        <title>Structure of yeast cytochrome c oxidase in a supercomplex with cytochrome bc1.</title>
        <authorList>
            <person name="Hartley A.M."/>
            <person name="Lukoyanova N."/>
            <person name="Zhang Y."/>
            <person name="Cabrera-Orefice A."/>
            <person name="Arnold S."/>
            <person name="Meunier B."/>
            <person name="Pinotsis N."/>
            <person name="Marechal A."/>
        </authorList>
    </citation>
    <scope>STRUCTURE BY ELECTRON MICROSCOPY (3.35 ANGSTROMS)</scope>
</reference>
<accession>P07256</accession>
<accession>D6VPV3</accession>
<evidence type="ECO:0000255" key="1"/>
<evidence type="ECO:0000269" key="2">
    <source>
    </source>
</evidence>
<evidence type="ECO:0000269" key="3">
    <source>
    </source>
</evidence>
<evidence type="ECO:0000269" key="4">
    <source>
    </source>
</evidence>
<evidence type="ECO:0000269" key="5">
    <source>
    </source>
</evidence>
<evidence type="ECO:0000269" key="6">
    <source>
    </source>
</evidence>
<evidence type="ECO:0000269" key="7">
    <source>
    </source>
</evidence>
<evidence type="ECO:0000269" key="8">
    <source>
    </source>
</evidence>
<evidence type="ECO:0000269" key="9">
    <source>
    </source>
</evidence>
<evidence type="ECO:0000269" key="10">
    <source>
    </source>
</evidence>
<evidence type="ECO:0000305" key="11"/>
<evidence type="ECO:0000305" key="12">
    <source>
    </source>
</evidence>
<evidence type="ECO:0000305" key="13">
    <source>
    </source>
</evidence>
<evidence type="ECO:0007829" key="14">
    <source>
        <dbReference type="PDB" id="1EZV"/>
    </source>
</evidence>
<evidence type="ECO:0007829" key="15">
    <source>
        <dbReference type="PDB" id="3CX5"/>
    </source>
</evidence>
<evidence type="ECO:0007829" key="16">
    <source>
        <dbReference type="PDB" id="4PD4"/>
    </source>
</evidence>
<evidence type="ECO:0007829" key="17">
    <source>
        <dbReference type="PDB" id="8E7S"/>
    </source>
</evidence>
<evidence type="ECO:0007829" key="18">
    <source>
        <dbReference type="PDB" id="8EC0"/>
    </source>
</evidence>
<evidence type="ECO:0007829" key="19">
    <source>
        <dbReference type="PDB" id="9ETZ"/>
    </source>
</evidence>
<proteinExistence type="evidence at protein level"/>
<dbReference type="EMBL" id="J02636">
    <property type="protein sequence ID" value="AAA34508.1"/>
    <property type="molecule type" value="Genomic_DNA"/>
</dbReference>
<dbReference type="EMBL" id="X78214">
    <property type="protein sequence ID" value="CAA55050.1"/>
    <property type="molecule type" value="Genomic_DNA"/>
</dbReference>
<dbReference type="EMBL" id="Z35806">
    <property type="protein sequence ID" value="CAA84865.1"/>
    <property type="molecule type" value="Genomic_DNA"/>
</dbReference>
<dbReference type="EMBL" id="AY693047">
    <property type="protein sequence ID" value="AAT93066.1"/>
    <property type="molecule type" value="Genomic_DNA"/>
</dbReference>
<dbReference type="EMBL" id="BK006936">
    <property type="protein sequence ID" value="DAA07073.1"/>
    <property type="molecule type" value="Genomic_DNA"/>
</dbReference>
<dbReference type="PIR" id="A25351">
    <property type="entry name" value="A25351"/>
</dbReference>
<dbReference type="RefSeq" id="NP_009508.1">
    <property type="nucleotide sequence ID" value="NM_001178285.1"/>
</dbReference>
<dbReference type="PDB" id="1EZV">
    <property type="method" value="X-ray"/>
    <property type="resolution" value="2.30 A"/>
    <property type="chains" value="A=27-457"/>
</dbReference>
<dbReference type="PDB" id="1KB9">
    <property type="method" value="X-ray"/>
    <property type="resolution" value="2.30 A"/>
    <property type="chains" value="A=27-457"/>
</dbReference>
<dbReference type="PDB" id="1KYO">
    <property type="method" value="X-ray"/>
    <property type="resolution" value="2.97 A"/>
    <property type="chains" value="A/L=27-457"/>
</dbReference>
<dbReference type="PDB" id="1P84">
    <property type="method" value="X-ray"/>
    <property type="resolution" value="2.50 A"/>
    <property type="chains" value="A=27-457"/>
</dbReference>
<dbReference type="PDB" id="2IBZ">
    <property type="method" value="X-ray"/>
    <property type="resolution" value="2.30 A"/>
    <property type="chains" value="A=27-457"/>
</dbReference>
<dbReference type="PDB" id="3CX5">
    <property type="method" value="X-ray"/>
    <property type="resolution" value="1.90 A"/>
    <property type="chains" value="A/L=27-457"/>
</dbReference>
<dbReference type="PDB" id="3CXH">
    <property type="method" value="X-ray"/>
    <property type="resolution" value="2.50 A"/>
    <property type="chains" value="A/L=27-457"/>
</dbReference>
<dbReference type="PDB" id="4PD4">
    <property type="method" value="X-ray"/>
    <property type="resolution" value="3.04 A"/>
    <property type="chains" value="A=27-457"/>
</dbReference>
<dbReference type="PDB" id="6GIQ">
    <property type="method" value="EM"/>
    <property type="resolution" value="3.23 A"/>
    <property type="chains" value="A/L=1-457"/>
</dbReference>
<dbReference type="PDB" id="6HU9">
    <property type="method" value="EM"/>
    <property type="resolution" value="3.35 A"/>
    <property type="chains" value="A/L=27-457"/>
</dbReference>
<dbReference type="PDB" id="6T0B">
    <property type="method" value="EM"/>
    <property type="resolution" value="2.80 A"/>
    <property type="chains" value="A/L=27-457"/>
</dbReference>
<dbReference type="PDB" id="6T15">
    <property type="method" value="EM"/>
    <property type="resolution" value="3.29 A"/>
    <property type="chains" value="A/L=27-457"/>
</dbReference>
<dbReference type="PDB" id="6YMX">
    <property type="method" value="EM"/>
    <property type="resolution" value="3.17 A"/>
    <property type="chains" value="A/L=27-457"/>
</dbReference>
<dbReference type="PDB" id="8E7S">
    <property type="method" value="EM"/>
    <property type="resolution" value="3.20 A"/>
    <property type="chains" value="A/a=1-457"/>
</dbReference>
<dbReference type="PDB" id="8EC0">
    <property type="method" value="EM"/>
    <property type="resolution" value="3.30 A"/>
    <property type="chains" value="A/a=1-457"/>
</dbReference>
<dbReference type="PDB" id="8YHQ">
    <property type="method" value="EM"/>
    <property type="resolution" value="2.42 A"/>
    <property type="chains" value="A/J=27-457"/>
</dbReference>
<dbReference type="PDB" id="8YIN">
    <property type="method" value="EM"/>
    <property type="resolution" value="2.74 A"/>
    <property type="chains" value="A/L=27-457"/>
</dbReference>
<dbReference type="PDB" id="8ZMT">
    <property type="method" value="EM"/>
    <property type="resolution" value="2.52 A"/>
    <property type="chains" value="A/L=27-457"/>
</dbReference>
<dbReference type="PDB" id="9ETZ">
    <property type="method" value="EM"/>
    <property type="resolution" value="2.40 A"/>
    <property type="chains" value="A/L=27-457"/>
</dbReference>
<dbReference type="PDBsum" id="1EZV"/>
<dbReference type="PDBsum" id="1KB9"/>
<dbReference type="PDBsum" id="1KYO"/>
<dbReference type="PDBsum" id="1P84"/>
<dbReference type="PDBsum" id="2IBZ"/>
<dbReference type="PDBsum" id="3CX5"/>
<dbReference type="PDBsum" id="3CXH"/>
<dbReference type="PDBsum" id="4PD4"/>
<dbReference type="PDBsum" id="6GIQ"/>
<dbReference type="PDBsum" id="6HU9"/>
<dbReference type="PDBsum" id="6T0B"/>
<dbReference type="PDBsum" id="6T15"/>
<dbReference type="PDBsum" id="6YMX"/>
<dbReference type="PDBsum" id="8E7S"/>
<dbReference type="PDBsum" id="8EC0"/>
<dbReference type="PDBsum" id="8YHQ"/>
<dbReference type="PDBsum" id="8YIN"/>
<dbReference type="PDBsum" id="8ZMT"/>
<dbReference type="PDBsum" id="9ETZ"/>
<dbReference type="EMDB" id="EMD-10317"/>
<dbReference type="EMDB" id="EMD-10340"/>
<dbReference type="EMDB" id="EMD-19963"/>
<dbReference type="EMDB" id="EMD-27940"/>
<dbReference type="EMDB" id="EMD-28011"/>
<dbReference type="SMR" id="P07256"/>
<dbReference type="BioGRID" id="32652">
    <property type="interactions" value="193"/>
</dbReference>
<dbReference type="ComplexPortal" id="CPX-567">
    <property type="entry name" value="Mitochondrial respiratory chain complex III"/>
</dbReference>
<dbReference type="DIP" id="DIP-2635N"/>
<dbReference type="FunCoup" id="P07256">
    <property type="interactions" value="527"/>
</dbReference>
<dbReference type="IntAct" id="P07256">
    <property type="interactions" value="70"/>
</dbReference>
<dbReference type="MINT" id="P07256"/>
<dbReference type="STRING" id="4932.YBL045C"/>
<dbReference type="iPTMnet" id="P07256"/>
<dbReference type="PaxDb" id="4932-YBL045C"/>
<dbReference type="PeptideAtlas" id="P07256"/>
<dbReference type="EnsemblFungi" id="YBL045C_mRNA">
    <property type="protein sequence ID" value="YBL045C"/>
    <property type="gene ID" value="YBL045C"/>
</dbReference>
<dbReference type="GeneID" id="852235"/>
<dbReference type="KEGG" id="sce:YBL045C"/>
<dbReference type="AGR" id="SGD:S000000141"/>
<dbReference type="SGD" id="S000000141">
    <property type="gene designation" value="COR1"/>
</dbReference>
<dbReference type="VEuPathDB" id="FungiDB:YBL045C"/>
<dbReference type="eggNOG" id="KOG0960">
    <property type="taxonomic scope" value="Eukaryota"/>
</dbReference>
<dbReference type="HOGENOM" id="CLU_009902_4_2_1"/>
<dbReference type="InParanoid" id="P07256"/>
<dbReference type="OMA" id="DSGLWGF"/>
<dbReference type="OrthoDB" id="10251424at2759"/>
<dbReference type="BioCyc" id="MetaCyc:YBL045C-MONOMER"/>
<dbReference type="BioCyc" id="YEAST:YBL045C-MONOMER"/>
<dbReference type="BRENDA" id="2.3.1.9">
    <property type="organism ID" value="6758"/>
</dbReference>
<dbReference type="Reactome" id="R-SCE-611105">
    <property type="pathway name" value="Respiratory electron transport"/>
</dbReference>
<dbReference type="Reactome" id="R-SCE-9865878">
    <property type="pathway name" value="Complex III assembly"/>
</dbReference>
<dbReference type="BioGRID-ORCS" id="852235">
    <property type="hits" value="8 hits in 10 CRISPR screens"/>
</dbReference>
<dbReference type="EvolutionaryTrace" id="P07256"/>
<dbReference type="PRO" id="PR:P07256"/>
<dbReference type="Proteomes" id="UP000002311">
    <property type="component" value="Chromosome II"/>
</dbReference>
<dbReference type="RNAct" id="P07256">
    <property type="molecule type" value="protein"/>
</dbReference>
<dbReference type="GO" id="GO:0005743">
    <property type="term" value="C:mitochondrial inner membrane"/>
    <property type="evidence" value="ECO:0000314"/>
    <property type="project" value="ComplexPortal"/>
</dbReference>
<dbReference type="GO" id="GO:0005739">
    <property type="term" value="C:mitochondrion"/>
    <property type="evidence" value="ECO:0000314"/>
    <property type="project" value="SGD"/>
</dbReference>
<dbReference type="GO" id="GO:0045275">
    <property type="term" value="C:respiratory chain complex III"/>
    <property type="evidence" value="ECO:0000314"/>
    <property type="project" value="SGD"/>
</dbReference>
<dbReference type="GO" id="GO:0046872">
    <property type="term" value="F:metal ion binding"/>
    <property type="evidence" value="ECO:0007669"/>
    <property type="project" value="InterPro"/>
</dbReference>
<dbReference type="GO" id="GO:0004222">
    <property type="term" value="F:metalloendopeptidase activity"/>
    <property type="evidence" value="ECO:0000318"/>
    <property type="project" value="GO_Central"/>
</dbReference>
<dbReference type="GO" id="GO:0009060">
    <property type="term" value="P:aerobic respiration"/>
    <property type="evidence" value="ECO:0000315"/>
    <property type="project" value="SGD"/>
</dbReference>
<dbReference type="GO" id="GO:0045333">
    <property type="term" value="P:cellular respiration"/>
    <property type="evidence" value="ECO:0000314"/>
    <property type="project" value="ComplexPortal"/>
</dbReference>
<dbReference type="GO" id="GO:0006122">
    <property type="term" value="P:mitochondrial electron transport, ubiquinol to cytochrome c"/>
    <property type="evidence" value="ECO:0000314"/>
    <property type="project" value="ComplexPortal"/>
</dbReference>
<dbReference type="GO" id="GO:0006627">
    <property type="term" value="P:protein processing involved in protein targeting to mitochondrion"/>
    <property type="evidence" value="ECO:0000318"/>
    <property type="project" value="GO_Central"/>
</dbReference>
<dbReference type="GO" id="GO:1902600">
    <property type="term" value="P:proton transmembrane transport"/>
    <property type="evidence" value="ECO:0007669"/>
    <property type="project" value="GOC"/>
</dbReference>
<dbReference type="FunFam" id="3.30.830.10:FF:000068">
    <property type="entry name" value="Cytochrome b-c1 complex subunit 1, mitochondrial"/>
    <property type="match status" value="1"/>
</dbReference>
<dbReference type="FunFam" id="3.30.830.10:FF:000001">
    <property type="entry name" value="Mitochondrial-processing peptidase subunit beta, mitochondrial"/>
    <property type="match status" value="1"/>
</dbReference>
<dbReference type="Gene3D" id="3.30.830.10">
    <property type="entry name" value="Metalloenzyme, LuxS/M16 peptidase-like"/>
    <property type="match status" value="2"/>
</dbReference>
<dbReference type="InterPro" id="IPR011249">
    <property type="entry name" value="Metalloenz_LuxS/M16"/>
</dbReference>
<dbReference type="InterPro" id="IPR050361">
    <property type="entry name" value="MPP/UQCRC_Complex"/>
</dbReference>
<dbReference type="InterPro" id="IPR011765">
    <property type="entry name" value="Pept_M16_N"/>
</dbReference>
<dbReference type="InterPro" id="IPR007863">
    <property type="entry name" value="Peptidase_M16_C"/>
</dbReference>
<dbReference type="PANTHER" id="PTHR11851:SF126">
    <property type="entry name" value="CYTOCHROME B-C1 COMPLEX SUBUNIT 1, MITOCHONDRIAL"/>
    <property type="match status" value="1"/>
</dbReference>
<dbReference type="PANTHER" id="PTHR11851">
    <property type="entry name" value="METALLOPROTEASE"/>
    <property type="match status" value="1"/>
</dbReference>
<dbReference type="Pfam" id="PF00675">
    <property type="entry name" value="Peptidase_M16"/>
    <property type="match status" value="1"/>
</dbReference>
<dbReference type="Pfam" id="PF05193">
    <property type="entry name" value="Peptidase_M16_C"/>
    <property type="match status" value="1"/>
</dbReference>
<dbReference type="SUPFAM" id="SSF63411">
    <property type="entry name" value="LuxS/MPP-like metallohydrolase"/>
    <property type="match status" value="2"/>
</dbReference>